<comment type="function">
    <text evidence="1">Specifically methylates the N4 position of cytidine in position 1402 (C1402) of 16S rRNA.</text>
</comment>
<comment type="catalytic activity">
    <reaction evidence="1">
        <text>cytidine(1402) in 16S rRNA + S-adenosyl-L-methionine = N(4)-methylcytidine(1402) in 16S rRNA + S-adenosyl-L-homocysteine + H(+)</text>
        <dbReference type="Rhea" id="RHEA:42928"/>
        <dbReference type="Rhea" id="RHEA-COMP:10286"/>
        <dbReference type="Rhea" id="RHEA-COMP:10287"/>
        <dbReference type="ChEBI" id="CHEBI:15378"/>
        <dbReference type="ChEBI" id="CHEBI:57856"/>
        <dbReference type="ChEBI" id="CHEBI:59789"/>
        <dbReference type="ChEBI" id="CHEBI:74506"/>
        <dbReference type="ChEBI" id="CHEBI:82748"/>
        <dbReference type="EC" id="2.1.1.199"/>
    </reaction>
</comment>
<comment type="subcellular location">
    <subcellularLocation>
        <location evidence="1">Cytoplasm</location>
    </subcellularLocation>
</comment>
<comment type="similarity">
    <text evidence="1">Belongs to the methyltransferase superfamily. RsmH family.</text>
</comment>
<proteinExistence type="inferred from homology"/>
<organism>
    <name type="scientific">Bifidobacterium adolescentis (strain ATCC 15703 / DSM 20083 / NCTC 11814 / E194a)</name>
    <dbReference type="NCBI Taxonomy" id="367928"/>
    <lineage>
        <taxon>Bacteria</taxon>
        <taxon>Bacillati</taxon>
        <taxon>Actinomycetota</taxon>
        <taxon>Actinomycetes</taxon>
        <taxon>Bifidobacteriales</taxon>
        <taxon>Bifidobacteriaceae</taxon>
        <taxon>Bifidobacterium</taxon>
    </lineage>
</organism>
<feature type="chain" id="PRO_0000386745" description="Ribosomal RNA small subunit methyltransferase H">
    <location>
        <begin position="1"/>
        <end position="343"/>
    </location>
</feature>
<feature type="binding site" evidence="1">
    <location>
        <begin position="39"/>
        <end position="41"/>
    </location>
    <ligand>
        <name>S-adenosyl-L-methionine</name>
        <dbReference type="ChEBI" id="CHEBI:59789"/>
    </ligand>
</feature>
<feature type="binding site" evidence="1">
    <location>
        <position position="58"/>
    </location>
    <ligand>
        <name>S-adenosyl-L-methionine</name>
        <dbReference type="ChEBI" id="CHEBI:59789"/>
    </ligand>
</feature>
<feature type="binding site" evidence="1">
    <location>
        <position position="87"/>
    </location>
    <ligand>
        <name>S-adenosyl-L-methionine</name>
        <dbReference type="ChEBI" id="CHEBI:59789"/>
    </ligand>
</feature>
<feature type="binding site" evidence="1">
    <location>
        <position position="108"/>
    </location>
    <ligand>
        <name>S-adenosyl-L-methionine</name>
        <dbReference type="ChEBI" id="CHEBI:59789"/>
    </ligand>
</feature>
<feature type="binding site" evidence="1">
    <location>
        <position position="115"/>
    </location>
    <ligand>
        <name>S-adenosyl-L-methionine</name>
        <dbReference type="ChEBI" id="CHEBI:59789"/>
    </ligand>
</feature>
<protein>
    <recommendedName>
        <fullName evidence="1">Ribosomal RNA small subunit methyltransferase H</fullName>
        <ecNumber evidence="1">2.1.1.199</ecNumber>
    </recommendedName>
    <alternativeName>
        <fullName evidence="1">16S rRNA m(4)C1402 methyltransferase</fullName>
    </alternativeName>
    <alternativeName>
        <fullName evidence="1">rRNA (cytosine-N(4)-)-methyltransferase RsmH</fullName>
    </alternativeName>
</protein>
<dbReference type="EC" id="2.1.1.199" evidence="1"/>
<dbReference type="EMBL" id="AP009256">
    <property type="protein sequence ID" value="BAF39890.1"/>
    <property type="molecule type" value="Genomic_DNA"/>
</dbReference>
<dbReference type="RefSeq" id="WP_011743449.1">
    <property type="nucleotide sequence ID" value="NC_008618.1"/>
</dbReference>
<dbReference type="SMR" id="A1A2F7"/>
<dbReference type="STRING" id="367928.BAD_1109"/>
<dbReference type="PaxDb" id="1680-BADO_1159"/>
<dbReference type="GeneID" id="4556419"/>
<dbReference type="KEGG" id="bad:BAD_1109"/>
<dbReference type="HOGENOM" id="CLU_038422_0_0_11"/>
<dbReference type="Proteomes" id="UP000008702">
    <property type="component" value="Chromosome"/>
</dbReference>
<dbReference type="GO" id="GO:0005737">
    <property type="term" value="C:cytoplasm"/>
    <property type="evidence" value="ECO:0007669"/>
    <property type="project" value="UniProtKB-SubCell"/>
</dbReference>
<dbReference type="GO" id="GO:0071424">
    <property type="term" value="F:rRNA (cytosine-N4-)-methyltransferase activity"/>
    <property type="evidence" value="ECO:0007669"/>
    <property type="project" value="UniProtKB-UniRule"/>
</dbReference>
<dbReference type="GO" id="GO:0070475">
    <property type="term" value="P:rRNA base methylation"/>
    <property type="evidence" value="ECO:0007669"/>
    <property type="project" value="UniProtKB-UniRule"/>
</dbReference>
<dbReference type="FunFam" id="1.10.150.170:FF:000001">
    <property type="entry name" value="Ribosomal RNA small subunit methyltransferase H"/>
    <property type="match status" value="1"/>
</dbReference>
<dbReference type="Gene3D" id="1.10.150.170">
    <property type="entry name" value="Putative methyltransferase TM0872, insert domain"/>
    <property type="match status" value="1"/>
</dbReference>
<dbReference type="Gene3D" id="3.40.50.150">
    <property type="entry name" value="Vaccinia Virus protein VP39"/>
    <property type="match status" value="1"/>
</dbReference>
<dbReference type="HAMAP" id="MF_01007">
    <property type="entry name" value="16SrRNA_methyltr_H"/>
    <property type="match status" value="1"/>
</dbReference>
<dbReference type="InterPro" id="IPR002903">
    <property type="entry name" value="RsmH"/>
</dbReference>
<dbReference type="InterPro" id="IPR023397">
    <property type="entry name" value="SAM-dep_MeTrfase_MraW_recog"/>
</dbReference>
<dbReference type="InterPro" id="IPR029063">
    <property type="entry name" value="SAM-dependent_MTases_sf"/>
</dbReference>
<dbReference type="NCBIfam" id="TIGR00006">
    <property type="entry name" value="16S rRNA (cytosine(1402)-N(4))-methyltransferase RsmH"/>
    <property type="match status" value="1"/>
</dbReference>
<dbReference type="PANTHER" id="PTHR11265:SF0">
    <property type="entry name" value="12S RRNA N4-METHYLCYTIDINE METHYLTRANSFERASE"/>
    <property type="match status" value="1"/>
</dbReference>
<dbReference type="PANTHER" id="PTHR11265">
    <property type="entry name" value="S-ADENOSYL-METHYLTRANSFERASE MRAW"/>
    <property type="match status" value="1"/>
</dbReference>
<dbReference type="Pfam" id="PF01795">
    <property type="entry name" value="Methyltransf_5"/>
    <property type="match status" value="1"/>
</dbReference>
<dbReference type="PIRSF" id="PIRSF004486">
    <property type="entry name" value="MraW"/>
    <property type="match status" value="1"/>
</dbReference>
<dbReference type="SUPFAM" id="SSF81799">
    <property type="entry name" value="Putative methyltransferase TM0872, insert domain"/>
    <property type="match status" value="1"/>
</dbReference>
<dbReference type="SUPFAM" id="SSF53335">
    <property type="entry name" value="S-adenosyl-L-methionine-dependent methyltransferases"/>
    <property type="match status" value="1"/>
</dbReference>
<evidence type="ECO:0000255" key="1">
    <source>
        <dbReference type="HAMAP-Rule" id="MF_01007"/>
    </source>
</evidence>
<gene>
    <name evidence="1" type="primary">rsmH</name>
    <name type="synonym">mraW</name>
    <name type="ordered locus">BAD_1109</name>
</gene>
<name>RSMH_BIFAA</name>
<keyword id="KW-0963">Cytoplasm</keyword>
<keyword id="KW-0489">Methyltransferase</keyword>
<keyword id="KW-1185">Reference proteome</keyword>
<keyword id="KW-0698">rRNA processing</keyword>
<keyword id="KW-0949">S-adenosyl-L-methionine</keyword>
<keyword id="KW-0808">Transferase</keyword>
<reference key="1">
    <citation type="submission" date="2006-12" db="EMBL/GenBank/DDBJ databases">
        <title>Bifidobacterium adolescentis complete genome sequence.</title>
        <authorList>
            <person name="Suzuki T."/>
            <person name="Tsuda Y."/>
            <person name="Kanou N."/>
            <person name="Inoue T."/>
            <person name="Kumazaki K."/>
            <person name="Nagano S."/>
            <person name="Hirai S."/>
            <person name="Tanaka K."/>
            <person name="Watanabe K."/>
        </authorList>
    </citation>
    <scope>NUCLEOTIDE SEQUENCE [LARGE SCALE GENOMIC DNA]</scope>
    <source>
        <strain>ATCC 15703 / DSM 20083 / NCTC 11814 / E194a</strain>
    </source>
</reference>
<sequence>MTDVTTIHQPVLLRDCVDLVAPALAKPGSIAVDCTLGLAGHSTAFLKASPNARLIGIDRDTEALALATKRMEMEGLADRFTPVHAAFDDFSQVLSDQGVDKVNAVFMDLGLSSLQIDETERGFSYSHDAPLDMRMDVTQPLTAEQVLAEYSFADLVRIFRAYGEERFSKQIAREIVRRRETEPLTTSGQLNRLVDEVVPQAHRPAGNPAKRVFQALRIEVNGELDKLAGTLPQIANHLAVGGRLVVESYHSLEDKTVKAFMNQGLKVDAPADMPVVPPDMMPFFKELTRGAIKADAEEIANNPRSASVRLRAVELTRPIPARWRKRFDQGADYASMTRQGRRD</sequence>
<accession>A1A2F7</accession>